<organism>
    <name type="scientific">Saccharomyces cerevisiae (strain ATCC 204508 / S288c)</name>
    <name type="common">Baker's yeast</name>
    <dbReference type="NCBI Taxonomy" id="559292"/>
    <lineage>
        <taxon>Eukaryota</taxon>
        <taxon>Fungi</taxon>
        <taxon>Dikarya</taxon>
        <taxon>Ascomycota</taxon>
        <taxon>Saccharomycotina</taxon>
        <taxon>Saccharomycetes</taxon>
        <taxon>Saccharomycetales</taxon>
        <taxon>Saccharomycetaceae</taxon>
        <taxon>Saccharomyces</taxon>
    </lineage>
</organism>
<keyword id="KW-0002">3D-structure</keyword>
<keyword id="KW-0963">Cytoplasm</keyword>
<keyword id="KW-0206">Cytoskeleton</keyword>
<keyword id="KW-0342">GTP-binding</keyword>
<keyword id="KW-0493">Microtubule</keyword>
<keyword id="KW-0547">Nucleotide-binding</keyword>
<keyword id="KW-1185">Reference proteome</keyword>
<sequence>MGGEIITLQAGQCGNHVGKFLWSQLAKEHAIGTDGLSQLPDSSTERDDDTKPFFRENSRNKFTPRAIMMDSEPSVIADVENTFRGFFDPRNTWVASDGASAGNSWANGYDIGTRNQDDILNKIDKEIDSTDNFEGFQLLHSVAGGTGSGLGSNLLEALCDRYPKKILTTYSVFPARSSEVVVQSYNTILALRRLIEDSDATVVFDNASLLNISGKVFRNPNIDLQHTNQLISTIISSVTNSIRFPSYMYSSMSSIYSTLIPSPELHFLSPSFTPFTSDYIHDDIAHKGHSSYDVMLDLLDPSNSLVSTAMNNPTYFNVYNTIIGNVEPRQISRAMTKLQQRIKFPSWSSSAMHVNIGRRSPYLPLQPNENEVSGMMLSNMSTVVNVFENACNTFDKVFAKGAFLNNYNVGDLFQSMQNVQDEFAESREVVQSLMEDYVAAEQDSYLDDVLVDDENMVGELEEDLDADGDHKLV</sequence>
<evidence type="ECO:0000255" key="1"/>
<evidence type="ECO:0000256" key="2">
    <source>
        <dbReference type="SAM" id="MobiDB-lite"/>
    </source>
</evidence>
<evidence type="ECO:0000269" key="3">
    <source>
    </source>
</evidence>
<evidence type="ECO:0000269" key="4">
    <source>
    </source>
</evidence>
<evidence type="ECO:0000305" key="5"/>
<evidence type="ECO:0007829" key="6">
    <source>
        <dbReference type="PDB" id="7M2W"/>
    </source>
</evidence>
<comment type="function">
    <text>Tubulin is the major constituent of microtubules. The gamma chain is found at microtubule organizing centers (MTOC) such as the spindle poles or the centrosome, suggesting that it is involved in the minus-end nucleation of microtubule assembly. TUB4 is an important spindle pole body component that organizes both cytoplasmic and nuclear microtubule arrays.</text>
</comment>
<comment type="subunit">
    <text evidence="4">Interacts with SPC72, SPC97 and SPC98.</text>
</comment>
<comment type="interaction">
    <interactant intactId="EBI-19013">
        <id>P53378</id>
    </interactant>
    <interactant intactId="EBI-17786">
        <id>P38863</id>
        <label>SPC97</label>
    </interactant>
    <organismsDiffer>false</organismsDiffer>
    <experiments>9</experiments>
</comment>
<comment type="interaction">
    <interactant intactId="EBI-19013">
        <id>P53378</id>
    </interactant>
    <interactant intactId="EBI-17794">
        <id>P53540</id>
        <label>SPC98</label>
    </interactant>
    <organismsDiffer>false</organismsDiffer>
    <experiments>4</experiments>
</comment>
<comment type="subcellular location">
    <subcellularLocation>
        <location>Cytoplasm</location>
        <location>Cytoskeleton</location>
        <location>Microtubule organizing center</location>
        <location>Spindle pole body</location>
    </subcellularLocation>
</comment>
<comment type="miscellaneous">
    <text evidence="3">Present with 7200 molecules/cell in log phase SD medium.</text>
</comment>
<comment type="similarity">
    <text evidence="5">Belongs to the tubulin family.</text>
</comment>
<name>TBG_YEAST</name>
<accession>P53378</accession>
<accession>D6VYL3</accession>
<feature type="chain" id="PRO_0000048481" description="Tubulin gamma chain">
    <location>
        <begin position="1"/>
        <end position="473"/>
    </location>
</feature>
<feature type="region of interest" description="Disordered" evidence="2">
    <location>
        <begin position="33"/>
        <end position="56"/>
    </location>
</feature>
<feature type="compositionally biased region" description="Basic and acidic residues" evidence="2">
    <location>
        <begin position="43"/>
        <end position="56"/>
    </location>
</feature>
<feature type="binding site" evidence="1">
    <location>
        <begin position="143"/>
        <end position="149"/>
    </location>
    <ligand>
        <name>GTP</name>
        <dbReference type="ChEBI" id="CHEBI:37565"/>
    </ligand>
</feature>
<feature type="strand" evidence="6">
    <location>
        <begin position="4"/>
        <end position="10"/>
    </location>
</feature>
<feature type="helix" evidence="6">
    <location>
        <begin position="11"/>
        <end position="28"/>
    </location>
</feature>
<feature type="turn" evidence="6">
    <location>
        <begin position="51"/>
        <end position="53"/>
    </location>
</feature>
<feature type="strand" evidence="6">
    <location>
        <begin position="54"/>
        <end position="56"/>
    </location>
</feature>
<feature type="strand" evidence="6">
    <location>
        <begin position="60"/>
        <end position="69"/>
    </location>
</feature>
<feature type="helix" evidence="6">
    <location>
        <begin position="73"/>
        <end position="82"/>
    </location>
</feature>
<feature type="turn" evidence="6">
    <location>
        <begin position="84"/>
        <end position="86"/>
    </location>
</feature>
<feature type="helix" evidence="6">
    <location>
        <begin position="89"/>
        <end position="91"/>
    </location>
</feature>
<feature type="strand" evidence="6">
    <location>
        <begin position="97"/>
        <end position="99"/>
    </location>
</feature>
<feature type="strand" evidence="6">
    <location>
        <begin position="101"/>
        <end position="103"/>
    </location>
</feature>
<feature type="helix" evidence="6">
    <location>
        <begin position="105"/>
        <end position="114"/>
    </location>
</feature>
<feature type="helix" evidence="6">
    <location>
        <begin position="116"/>
        <end position="128"/>
    </location>
</feature>
<feature type="strand" evidence="6">
    <location>
        <begin position="131"/>
        <end position="144"/>
    </location>
</feature>
<feature type="helix" evidence="6">
    <location>
        <begin position="145"/>
        <end position="161"/>
    </location>
</feature>
<feature type="strand" evidence="6">
    <location>
        <begin position="165"/>
        <end position="173"/>
    </location>
</feature>
<feature type="helix" evidence="6">
    <location>
        <begin position="180"/>
        <end position="197"/>
    </location>
</feature>
<feature type="strand" evidence="6">
    <location>
        <begin position="199"/>
        <end position="205"/>
    </location>
</feature>
<feature type="helix" evidence="6">
    <location>
        <begin position="206"/>
        <end position="216"/>
    </location>
</feature>
<feature type="helix" evidence="6">
    <location>
        <begin position="224"/>
        <end position="243"/>
    </location>
</feature>
<feature type="helix" evidence="6">
    <location>
        <begin position="252"/>
        <end position="259"/>
    </location>
</feature>
<feature type="strand" evidence="6">
    <location>
        <begin position="267"/>
        <end position="274"/>
    </location>
</feature>
<feature type="helix" evidence="6">
    <location>
        <begin position="291"/>
        <end position="297"/>
    </location>
</feature>
<feature type="helix" evidence="6">
    <location>
        <begin position="301"/>
        <end position="303"/>
    </location>
</feature>
<feature type="strand" evidence="6">
    <location>
        <begin position="304"/>
        <end position="306"/>
    </location>
</feature>
<feature type="strand" evidence="6">
    <location>
        <begin position="315"/>
        <end position="325"/>
    </location>
</feature>
<feature type="helix" evidence="6">
    <location>
        <begin position="328"/>
        <end position="341"/>
    </location>
</feature>
<feature type="strand" evidence="6">
    <location>
        <begin position="352"/>
        <end position="357"/>
    </location>
</feature>
<feature type="strand" evidence="6">
    <location>
        <begin position="361"/>
        <end position="363"/>
    </location>
</feature>
<feature type="strand" evidence="6">
    <location>
        <begin position="373"/>
        <end position="380"/>
    </location>
</feature>
<feature type="helix" evidence="6">
    <location>
        <begin position="381"/>
        <end position="385"/>
    </location>
</feature>
<feature type="helix" evidence="6">
    <location>
        <begin position="388"/>
        <end position="397"/>
    </location>
</feature>
<feature type="strand" evidence="6">
    <location>
        <begin position="398"/>
        <end position="401"/>
    </location>
</feature>
<feature type="helix" evidence="6">
    <location>
        <begin position="404"/>
        <end position="407"/>
    </location>
</feature>
<feature type="helix" evidence="6">
    <location>
        <begin position="412"/>
        <end position="414"/>
    </location>
</feature>
<feature type="helix" evidence="6">
    <location>
        <begin position="416"/>
        <end position="440"/>
    </location>
</feature>
<feature type="helix" evidence="6">
    <location>
        <begin position="443"/>
        <end position="446"/>
    </location>
</feature>
<feature type="turn" evidence="6">
    <location>
        <begin position="447"/>
        <end position="449"/>
    </location>
</feature>
<dbReference type="EMBL" id="U14913">
    <property type="protein sequence ID" value="AAB67442.1"/>
    <property type="molecule type" value="Genomic_DNA"/>
</dbReference>
<dbReference type="EMBL" id="BK006945">
    <property type="protein sequence ID" value="DAA09529.1"/>
    <property type="molecule type" value="Genomic_DNA"/>
</dbReference>
<dbReference type="PIR" id="S48563">
    <property type="entry name" value="S48563"/>
</dbReference>
<dbReference type="RefSeq" id="NP_013313.1">
    <property type="nucleotide sequence ID" value="NM_001182099.1"/>
</dbReference>
<dbReference type="PDB" id="5FLZ">
    <property type="method" value="EM"/>
    <property type="resolution" value="6.90 A"/>
    <property type="chains" value="C/D=1-473"/>
</dbReference>
<dbReference type="PDB" id="5FM1">
    <property type="method" value="EM"/>
    <property type="resolution" value="8.00 A"/>
    <property type="chains" value="C/D=1-473"/>
</dbReference>
<dbReference type="PDB" id="7M2W">
    <property type="method" value="EM"/>
    <property type="resolution" value="3.00 A"/>
    <property type="chains" value="A/B/C/D=1-473"/>
</dbReference>
<dbReference type="PDB" id="7M2X">
    <property type="method" value="EM"/>
    <property type="resolution" value="3.60 A"/>
    <property type="chains" value="A/B=1-473"/>
</dbReference>
<dbReference type="PDB" id="7M2Y">
    <property type="method" value="EM"/>
    <property type="resolution" value="4.03 A"/>
    <property type="chains" value="A/B=1-473"/>
</dbReference>
<dbReference type="PDB" id="7M2Z">
    <property type="method" value="EM"/>
    <property type="resolution" value="3.70 A"/>
    <property type="chains" value="A/B=1-473"/>
</dbReference>
<dbReference type="PDB" id="8QV2">
    <property type="method" value="EM"/>
    <property type="resolution" value="9.20 A"/>
    <property type="chains" value="a/b/c/d/e/f/g/h/i/j/k/l/m/n=1-473"/>
</dbReference>
<dbReference type="PDB" id="8QV3">
    <property type="method" value="EM"/>
    <property type="resolution" value="8.20 A"/>
    <property type="chains" value="c/d=1-473"/>
</dbReference>
<dbReference type="PDBsum" id="5FLZ"/>
<dbReference type="PDBsum" id="5FM1"/>
<dbReference type="PDBsum" id="7M2W"/>
<dbReference type="PDBsum" id="7M2X"/>
<dbReference type="PDBsum" id="7M2Y"/>
<dbReference type="PDBsum" id="7M2Z"/>
<dbReference type="PDBsum" id="8QV2"/>
<dbReference type="PDBsum" id="8QV3"/>
<dbReference type="EMDB" id="EMD-23635"/>
<dbReference type="EMDB" id="EMD-23636"/>
<dbReference type="EMDB" id="EMD-23637"/>
<dbReference type="EMDB" id="EMD-23638"/>
<dbReference type="EMDB" id="EMD-2799"/>
<dbReference type="SMR" id="P53378"/>
<dbReference type="BioGRID" id="31480">
    <property type="interactions" value="1077"/>
</dbReference>
<dbReference type="ComplexPortal" id="CPX-1198">
    <property type="entry name" value="Gamma tubulin small complex"/>
</dbReference>
<dbReference type="DIP" id="DIP-821N"/>
<dbReference type="FunCoup" id="P53378">
    <property type="interactions" value="851"/>
</dbReference>
<dbReference type="IntAct" id="P53378">
    <property type="interactions" value="9"/>
</dbReference>
<dbReference type="MINT" id="P53378"/>
<dbReference type="STRING" id="4932.YLR212C"/>
<dbReference type="iPTMnet" id="P53378"/>
<dbReference type="PaxDb" id="4932-YLR212C"/>
<dbReference type="PeptideAtlas" id="P53378"/>
<dbReference type="EnsemblFungi" id="YLR212C_mRNA">
    <property type="protein sequence ID" value="YLR212C"/>
    <property type="gene ID" value="YLR212C"/>
</dbReference>
<dbReference type="GeneID" id="850909"/>
<dbReference type="KEGG" id="sce:YLR212C"/>
<dbReference type="AGR" id="SGD:S000004202"/>
<dbReference type="SGD" id="S000004202">
    <property type="gene designation" value="TUB4"/>
</dbReference>
<dbReference type="VEuPathDB" id="FungiDB:YLR212C"/>
<dbReference type="eggNOG" id="KOG1374">
    <property type="taxonomic scope" value="Eukaryota"/>
</dbReference>
<dbReference type="GeneTree" id="ENSGT00940000174463"/>
<dbReference type="HOGENOM" id="CLU_015718_1_0_1"/>
<dbReference type="InParanoid" id="P53378"/>
<dbReference type="OMA" id="HRYISIL"/>
<dbReference type="OrthoDB" id="10249382at2759"/>
<dbReference type="BioCyc" id="YEAST:G3O-32329-MONOMER"/>
<dbReference type="BioGRID-ORCS" id="850909">
    <property type="hits" value="5 hits in 10 CRISPR screens"/>
</dbReference>
<dbReference type="CD-CODE" id="876000F7">
    <property type="entry name" value="Centrosome"/>
</dbReference>
<dbReference type="EvolutionaryTrace" id="P53378"/>
<dbReference type="PRO" id="PR:P53378"/>
<dbReference type="Proteomes" id="UP000002311">
    <property type="component" value="Chromosome XII"/>
</dbReference>
<dbReference type="RNAct" id="P53378">
    <property type="molecule type" value="protein"/>
</dbReference>
<dbReference type="GO" id="GO:0005737">
    <property type="term" value="C:cytoplasm"/>
    <property type="evidence" value="ECO:0000318"/>
    <property type="project" value="GO_Central"/>
</dbReference>
<dbReference type="GO" id="GO:0000931">
    <property type="term" value="C:gamma-tubulin ring complex"/>
    <property type="evidence" value="ECO:0000318"/>
    <property type="project" value="GO_Central"/>
</dbReference>
<dbReference type="GO" id="GO:0008275">
    <property type="term" value="C:gamma-tubulin small complex"/>
    <property type="evidence" value="ECO:0000314"/>
    <property type="project" value="SGD"/>
</dbReference>
<dbReference type="GO" id="GO:0005822">
    <property type="term" value="C:inner plaque of spindle pole body"/>
    <property type="evidence" value="ECO:0000314"/>
    <property type="project" value="SGD"/>
</dbReference>
<dbReference type="GO" id="GO:0005874">
    <property type="term" value="C:microtubule"/>
    <property type="evidence" value="ECO:0007669"/>
    <property type="project" value="UniProtKB-KW"/>
</dbReference>
<dbReference type="GO" id="GO:0005634">
    <property type="term" value="C:nucleus"/>
    <property type="evidence" value="ECO:0000318"/>
    <property type="project" value="GO_Central"/>
</dbReference>
<dbReference type="GO" id="GO:0005824">
    <property type="term" value="C:outer plaque of spindle pole body"/>
    <property type="evidence" value="ECO:0000314"/>
    <property type="project" value="SGD"/>
</dbReference>
<dbReference type="GO" id="GO:0005819">
    <property type="term" value="C:spindle"/>
    <property type="evidence" value="ECO:0000318"/>
    <property type="project" value="GO_Central"/>
</dbReference>
<dbReference type="GO" id="GO:0005816">
    <property type="term" value="C:spindle pole body"/>
    <property type="evidence" value="ECO:0007005"/>
    <property type="project" value="SGD"/>
</dbReference>
<dbReference type="GO" id="GO:0005525">
    <property type="term" value="F:GTP binding"/>
    <property type="evidence" value="ECO:0000318"/>
    <property type="project" value="GO_Central"/>
</dbReference>
<dbReference type="GO" id="GO:0140490">
    <property type="term" value="F:microtubule nucleator activity"/>
    <property type="evidence" value="ECO:0000318"/>
    <property type="project" value="GO_Central"/>
</dbReference>
<dbReference type="GO" id="GO:0005200">
    <property type="term" value="F:structural constituent of cytoskeleton"/>
    <property type="evidence" value="ECO:0000315"/>
    <property type="project" value="SGD"/>
</dbReference>
<dbReference type="GO" id="GO:0031122">
    <property type="term" value="P:cytoplasmic microtubule organization"/>
    <property type="evidence" value="ECO:0007669"/>
    <property type="project" value="InterPro"/>
</dbReference>
<dbReference type="GO" id="GO:0000212">
    <property type="term" value="P:meiotic spindle organization"/>
    <property type="evidence" value="ECO:0000318"/>
    <property type="project" value="GO_Central"/>
</dbReference>
<dbReference type="GO" id="GO:0007020">
    <property type="term" value="P:microtubule nucleation"/>
    <property type="evidence" value="ECO:0000314"/>
    <property type="project" value="SGD"/>
</dbReference>
<dbReference type="GO" id="GO:0051417">
    <property type="term" value="P:microtubule nucleation by spindle pole body"/>
    <property type="evidence" value="ECO:0000315"/>
    <property type="project" value="SGD"/>
</dbReference>
<dbReference type="GO" id="GO:0000278">
    <property type="term" value="P:mitotic cell cycle"/>
    <property type="evidence" value="ECO:0000318"/>
    <property type="project" value="GO_Central"/>
</dbReference>
<dbReference type="GO" id="GO:0000070">
    <property type="term" value="P:mitotic sister chromatid segregation"/>
    <property type="evidence" value="ECO:0000318"/>
    <property type="project" value="GO_Central"/>
</dbReference>
<dbReference type="GO" id="GO:0007052">
    <property type="term" value="P:mitotic spindle organization"/>
    <property type="evidence" value="ECO:0000315"/>
    <property type="project" value="SGD"/>
</dbReference>
<dbReference type="GO" id="GO:2000767">
    <property type="term" value="P:positive regulation of cytoplasmic translation"/>
    <property type="evidence" value="ECO:0000315"/>
    <property type="project" value="SGD"/>
</dbReference>
<dbReference type="GO" id="GO:0010968">
    <property type="term" value="P:regulation of microtubule nucleation"/>
    <property type="evidence" value="ECO:0000269"/>
    <property type="project" value="ComplexPortal"/>
</dbReference>
<dbReference type="CDD" id="cd02188">
    <property type="entry name" value="gamma_tubulin"/>
    <property type="match status" value="1"/>
</dbReference>
<dbReference type="DisProt" id="DP01513"/>
<dbReference type="FunFam" id="3.30.1330.20:FF:000020">
    <property type="entry name" value="Tubulin gamma chain"/>
    <property type="match status" value="1"/>
</dbReference>
<dbReference type="FunFam" id="3.40.50.1440:FF:000039">
    <property type="entry name" value="Tubulin gamma chain"/>
    <property type="match status" value="1"/>
</dbReference>
<dbReference type="Gene3D" id="1.10.287.600">
    <property type="entry name" value="Helix hairpin bin"/>
    <property type="match status" value="1"/>
</dbReference>
<dbReference type="Gene3D" id="3.30.1330.20">
    <property type="entry name" value="Tubulin/FtsZ, C-terminal domain"/>
    <property type="match status" value="1"/>
</dbReference>
<dbReference type="Gene3D" id="3.40.50.1440">
    <property type="entry name" value="Tubulin/FtsZ, GTPase domain"/>
    <property type="match status" value="1"/>
</dbReference>
<dbReference type="InterPro" id="IPR002454">
    <property type="entry name" value="Gamma_tubulin"/>
</dbReference>
<dbReference type="InterPro" id="IPR008280">
    <property type="entry name" value="Tub_FtsZ_C"/>
</dbReference>
<dbReference type="InterPro" id="IPR000217">
    <property type="entry name" value="Tubulin"/>
</dbReference>
<dbReference type="InterPro" id="IPR037103">
    <property type="entry name" value="Tubulin/FtsZ-like_C"/>
</dbReference>
<dbReference type="InterPro" id="IPR018316">
    <property type="entry name" value="Tubulin/FtsZ_2-layer-sand-dom"/>
</dbReference>
<dbReference type="InterPro" id="IPR036525">
    <property type="entry name" value="Tubulin/FtsZ_GTPase_sf"/>
</dbReference>
<dbReference type="InterPro" id="IPR023123">
    <property type="entry name" value="Tubulin_C"/>
</dbReference>
<dbReference type="InterPro" id="IPR017975">
    <property type="entry name" value="Tubulin_CS"/>
</dbReference>
<dbReference type="InterPro" id="IPR003008">
    <property type="entry name" value="Tubulin_FtsZ_GTPase"/>
</dbReference>
<dbReference type="PANTHER" id="PTHR11588">
    <property type="entry name" value="TUBULIN"/>
    <property type="match status" value="1"/>
</dbReference>
<dbReference type="Pfam" id="PF00091">
    <property type="entry name" value="Tubulin"/>
    <property type="match status" value="1"/>
</dbReference>
<dbReference type="Pfam" id="PF03953">
    <property type="entry name" value="Tubulin_C"/>
    <property type="match status" value="1"/>
</dbReference>
<dbReference type="PRINTS" id="PR01164">
    <property type="entry name" value="GAMMATUBULIN"/>
</dbReference>
<dbReference type="PRINTS" id="PR01161">
    <property type="entry name" value="TUBULIN"/>
</dbReference>
<dbReference type="SMART" id="SM00864">
    <property type="entry name" value="Tubulin"/>
    <property type="match status" value="1"/>
</dbReference>
<dbReference type="SMART" id="SM00865">
    <property type="entry name" value="Tubulin_C"/>
    <property type="match status" value="1"/>
</dbReference>
<dbReference type="SUPFAM" id="SSF55307">
    <property type="entry name" value="Tubulin C-terminal domain-like"/>
    <property type="match status" value="1"/>
</dbReference>
<dbReference type="SUPFAM" id="SSF52490">
    <property type="entry name" value="Tubulin nucleotide-binding domain-like"/>
    <property type="match status" value="1"/>
</dbReference>
<dbReference type="PROSITE" id="PS00227">
    <property type="entry name" value="TUBULIN"/>
    <property type="match status" value="1"/>
</dbReference>
<proteinExistence type="evidence at protein level"/>
<protein>
    <recommendedName>
        <fullName>Tubulin gamma chain</fullName>
    </recommendedName>
    <alternativeName>
        <fullName>Gamma-tubulin</fullName>
    </alternativeName>
</protein>
<reference key="1">
    <citation type="journal article" date="1997" name="Nature">
        <title>The nucleotide sequence of Saccharomyces cerevisiae chromosome XII.</title>
        <authorList>
            <person name="Johnston M."/>
            <person name="Hillier L.W."/>
            <person name="Riles L."/>
            <person name="Albermann K."/>
            <person name="Andre B."/>
            <person name="Ansorge W."/>
            <person name="Benes V."/>
            <person name="Brueckner M."/>
            <person name="Delius H."/>
            <person name="Dubois E."/>
            <person name="Duesterhoeft A."/>
            <person name="Entian K.-D."/>
            <person name="Floeth M."/>
            <person name="Goffeau A."/>
            <person name="Hebling U."/>
            <person name="Heumann K."/>
            <person name="Heuss-Neitzel D."/>
            <person name="Hilbert H."/>
            <person name="Hilger F."/>
            <person name="Kleine K."/>
            <person name="Koetter P."/>
            <person name="Louis E.J."/>
            <person name="Messenguy F."/>
            <person name="Mewes H.-W."/>
            <person name="Miosga T."/>
            <person name="Moestl D."/>
            <person name="Mueller-Auer S."/>
            <person name="Nentwich U."/>
            <person name="Obermaier B."/>
            <person name="Piravandi E."/>
            <person name="Pohl T.M."/>
            <person name="Portetelle D."/>
            <person name="Purnelle B."/>
            <person name="Rechmann S."/>
            <person name="Rieger M."/>
            <person name="Rinke M."/>
            <person name="Rose M."/>
            <person name="Scharfe M."/>
            <person name="Scherens B."/>
            <person name="Scholler P."/>
            <person name="Schwager C."/>
            <person name="Schwarz S."/>
            <person name="Underwood A.P."/>
            <person name="Urrestarazu L.A."/>
            <person name="Vandenbol M."/>
            <person name="Verhasselt P."/>
            <person name="Vierendeels F."/>
            <person name="Voet M."/>
            <person name="Volckaert G."/>
            <person name="Voss H."/>
            <person name="Wambutt R."/>
            <person name="Wedler E."/>
            <person name="Wedler H."/>
            <person name="Zimmermann F.K."/>
            <person name="Zollner A."/>
            <person name="Hani J."/>
            <person name="Hoheisel J.D."/>
        </authorList>
    </citation>
    <scope>NUCLEOTIDE SEQUENCE [LARGE SCALE GENOMIC DNA]</scope>
    <source>
        <strain>ATCC 204508 / S288c</strain>
    </source>
</reference>
<reference key="2">
    <citation type="journal article" date="2014" name="G3 (Bethesda)">
        <title>The reference genome sequence of Saccharomyces cerevisiae: Then and now.</title>
        <authorList>
            <person name="Engel S.R."/>
            <person name="Dietrich F.S."/>
            <person name="Fisk D.G."/>
            <person name="Binkley G."/>
            <person name="Balakrishnan R."/>
            <person name="Costanzo M.C."/>
            <person name="Dwight S.S."/>
            <person name="Hitz B.C."/>
            <person name="Karra K."/>
            <person name="Nash R.S."/>
            <person name="Weng S."/>
            <person name="Wong E.D."/>
            <person name="Lloyd P."/>
            <person name="Skrzypek M.S."/>
            <person name="Miyasato S.R."/>
            <person name="Simison M."/>
            <person name="Cherry J.M."/>
        </authorList>
    </citation>
    <scope>GENOME REANNOTATION</scope>
    <source>
        <strain>ATCC 204508 / S288c</strain>
    </source>
</reference>
<reference key="3">
    <citation type="journal article" date="1995" name="J. Cell Biol.">
        <title>A highly divergent gamma-tubulin gene is essential for cell growth and proper microtubule organization in Saccharomyces cerevisiae.</title>
        <authorList>
            <person name="Sobel S.G."/>
            <person name="Snyder M."/>
        </authorList>
    </citation>
    <scope>CHARACTERIZATION</scope>
    <source>
        <strain>Y270</strain>
    </source>
</reference>
<reference key="4">
    <citation type="journal article" date="1996" name="J. Cell Biol.">
        <title>Gamma-tubulin-like Tub4p of Saccharomyces cerevisiae is associated with the spindle pole body substructures that organize microtubules and is required for mitotic spindle formation.</title>
        <authorList>
            <person name="Spang A."/>
            <person name="Geissler S."/>
            <person name="Grain K."/>
            <person name="Schiebel E."/>
        </authorList>
    </citation>
    <scope>CHARACTERIZATION</scope>
</reference>
<reference key="5">
    <citation type="journal article" date="1998" name="EMBO J.">
        <title>Receptors determine the cellular localization of a gamma-tubulin complex and thereby the site of microtubule formation.</title>
        <authorList>
            <person name="Knop M."/>
            <person name="Schiebel E."/>
        </authorList>
    </citation>
    <scope>INTERACTION WITH SPC72</scope>
</reference>
<reference key="6">
    <citation type="journal article" date="2003" name="Nature">
        <title>Global analysis of protein expression in yeast.</title>
        <authorList>
            <person name="Ghaemmaghami S."/>
            <person name="Huh W.-K."/>
            <person name="Bower K."/>
            <person name="Howson R.W."/>
            <person name="Belle A."/>
            <person name="Dephoure N."/>
            <person name="O'Shea E.K."/>
            <person name="Weissman J.S."/>
        </authorList>
    </citation>
    <scope>LEVEL OF PROTEIN EXPRESSION [LARGE SCALE ANALYSIS]</scope>
</reference>
<gene>
    <name type="primary">TUB4</name>
    <name type="ordered locus">YLR212C</name>
    <name type="ORF">L8167.21</name>
</gene>